<reference key="1">
    <citation type="journal article" date="2001" name="DNA Res.">
        <title>Complete genomic sequence of the filamentous nitrogen-fixing cyanobacterium Anabaena sp. strain PCC 7120.</title>
        <authorList>
            <person name="Kaneko T."/>
            <person name="Nakamura Y."/>
            <person name="Wolk C.P."/>
            <person name="Kuritz T."/>
            <person name="Sasamoto S."/>
            <person name="Watanabe A."/>
            <person name="Iriguchi M."/>
            <person name="Ishikawa A."/>
            <person name="Kawashima K."/>
            <person name="Kimura T."/>
            <person name="Kishida Y."/>
            <person name="Kohara M."/>
            <person name="Matsumoto M."/>
            <person name="Matsuno A."/>
            <person name="Muraki A."/>
            <person name="Nakazaki N."/>
            <person name="Shimpo S."/>
            <person name="Sugimoto M."/>
            <person name="Takazawa M."/>
            <person name="Yamada M."/>
            <person name="Yasuda M."/>
            <person name="Tabata S."/>
        </authorList>
    </citation>
    <scope>NUCLEOTIDE SEQUENCE [LARGE SCALE GENOMIC DNA]</scope>
    <source>
        <strain>PCC 7120 / SAG 25.82 / UTEX 2576</strain>
    </source>
</reference>
<name>RPOA_NOSS1</name>
<protein>
    <recommendedName>
        <fullName evidence="2">DNA-directed RNA polymerase subunit alpha</fullName>
        <shortName evidence="2">RNAP subunit alpha</shortName>
        <ecNumber evidence="2">2.7.7.6</ecNumber>
    </recommendedName>
    <alternativeName>
        <fullName evidence="2">RNA polymerase subunit alpha</fullName>
    </alternativeName>
    <alternativeName>
        <fullName evidence="2">Transcriptase subunit alpha</fullName>
    </alternativeName>
</protein>
<dbReference type="EC" id="2.7.7.6" evidence="2"/>
<dbReference type="EMBL" id="BA000019">
    <property type="protein sequence ID" value="BAB75890.1"/>
    <property type="molecule type" value="Genomic_DNA"/>
</dbReference>
<dbReference type="PIR" id="AH2329">
    <property type="entry name" value="AH2329"/>
</dbReference>
<dbReference type="RefSeq" id="WP_010998330.1">
    <property type="nucleotide sequence ID" value="NZ_RSCN01000010.1"/>
</dbReference>
<dbReference type="PDB" id="8H3V">
    <property type="method" value="EM"/>
    <property type="resolution" value="4.50 A"/>
    <property type="chains" value="C/D=2-235"/>
</dbReference>
<dbReference type="PDB" id="8H40">
    <property type="method" value="EM"/>
    <property type="resolution" value="3.60 A"/>
    <property type="chains" value="C/D=2-235"/>
</dbReference>
<dbReference type="PDBsum" id="8H3V"/>
<dbReference type="PDBsum" id="8H40"/>
<dbReference type="EMDB" id="EMD-34475"/>
<dbReference type="EMDB" id="EMD-34476"/>
<dbReference type="SMR" id="Q8YPK3"/>
<dbReference type="STRING" id="103690.gene:10496240"/>
<dbReference type="KEGG" id="ana:all4191"/>
<dbReference type="eggNOG" id="COG0202">
    <property type="taxonomic scope" value="Bacteria"/>
</dbReference>
<dbReference type="OrthoDB" id="9805706at2"/>
<dbReference type="Proteomes" id="UP000002483">
    <property type="component" value="Chromosome"/>
</dbReference>
<dbReference type="GO" id="GO:0005737">
    <property type="term" value="C:cytoplasm"/>
    <property type="evidence" value="ECO:0007669"/>
    <property type="project" value="UniProtKB-ARBA"/>
</dbReference>
<dbReference type="GO" id="GO:0000428">
    <property type="term" value="C:DNA-directed RNA polymerase complex"/>
    <property type="evidence" value="ECO:0007669"/>
    <property type="project" value="UniProtKB-KW"/>
</dbReference>
<dbReference type="GO" id="GO:0003677">
    <property type="term" value="F:DNA binding"/>
    <property type="evidence" value="ECO:0007669"/>
    <property type="project" value="UniProtKB-UniRule"/>
</dbReference>
<dbReference type="GO" id="GO:0003899">
    <property type="term" value="F:DNA-directed RNA polymerase activity"/>
    <property type="evidence" value="ECO:0007669"/>
    <property type="project" value="UniProtKB-UniRule"/>
</dbReference>
<dbReference type="GO" id="GO:0046983">
    <property type="term" value="F:protein dimerization activity"/>
    <property type="evidence" value="ECO:0007669"/>
    <property type="project" value="InterPro"/>
</dbReference>
<dbReference type="GO" id="GO:0006351">
    <property type="term" value="P:DNA-templated transcription"/>
    <property type="evidence" value="ECO:0007669"/>
    <property type="project" value="UniProtKB-UniRule"/>
</dbReference>
<dbReference type="CDD" id="cd06928">
    <property type="entry name" value="RNAP_alpha_NTD"/>
    <property type="match status" value="1"/>
</dbReference>
<dbReference type="FunFam" id="1.10.150.20:FF:000120">
    <property type="entry name" value="DNA-directed RNA polymerase subunit alpha"/>
    <property type="match status" value="1"/>
</dbReference>
<dbReference type="FunFam" id="2.170.120.12:FF:000001">
    <property type="entry name" value="DNA-directed RNA polymerase subunit alpha"/>
    <property type="match status" value="1"/>
</dbReference>
<dbReference type="Gene3D" id="1.10.150.20">
    <property type="entry name" value="5' to 3' exonuclease, C-terminal subdomain"/>
    <property type="match status" value="1"/>
</dbReference>
<dbReference type="Gene3D" id="2.170.120.12">
    <property type="entry name" value="DNA-directed RNA polymerase, insert domain"/>
    <property type="match status" value="1"/>
</dbReference>
<dbReference type="Gene3D" id="3.30.1360.10">
    <property type="entry name" value="RNA polymerase, RBP11-like subunit"/>
    <property type="match status" value="1"/>
</dbReference>
<dbReference type="HAMAP" id="MF_00059">
    <property type="entry name" value="RNApol_bact_RpoA"/>
    <property type="match status" value="1"/>
</dbReference>
<dbReference type="InterPro" id="IPR011262">
    <property type="entry name" value="DNA-dir_RNA_pol_insert"/>
</dbReference>
<dbReference type="InterPro" id="IPR011263">
    <property type="entry name" value="DNA-dir_RNA_pol_RpoA/D/Rpb3"/>
</dbReference>
<dbReference type="InterPro" id="IPR011773">
    <property type="entry name" value="DNA-dir_RpoA"/>
</dbReference>
<dbReference type="InterPro" id="IPR036603">
    <property type="entry name" value="RBP11-like"/>
</dbReference>
<dbReference type="InterPro" id="IPR011260">
    <property type="entry name" value="RNAP_asu_C"/>
</dbReference>
<dbReference type="InterPro" id="IPR036643">
    <property type="entry name" value="RNApol_insert_sf"/>
</dbReference>
<dbReference type="NCBIfam" id="NF003516">
    <property type="entry name" value="PRK05182.2-2"/>
    <property type="match status" value="1"/>
</dbReference>
<dbReference type="NCBIfam" id="NF003519">
    <property type="entry name" value="PRK05182.2-5"/>
    <property type="match status" value="1"/>
</dbReference>
<dbReference type="NCBIfam" id="TIGR02027">
    <property type="entry name" value="rpoA"/>
    <property type="match status" value="1"/>
</dbReference>
<dbReference type="Pfam" id="PF01000">
    <property type="entry name" value="RNA_pol_A_bac"/>
    <property type="match status" value="1"/>
</dbReference>
<dbReference type="Pfam" id="PF03118">
    <property type="entry name" value="RNA_pol_A_CTD"/>
    <property type="match status" value="1"/>
</dbReference>
<dbReference type="Pfam" id="PF01193">
    <property type="entry name" value="RNA_pol_L"/>
    <property type="match status" value="1"/>
</dbReference>
<dbReference type="SMART" id="SM00662">
    <property type="entry name" value="RPOLD"/>
    <property type="match status" value="1"/>
</dbReference>
<dbReference type="SUPFAM" id="SSF47789">
    <property type="entry name" value="C-terminal domain of RNA polymerase alpha subunit"/>
    <property type="match status" value="1"/>
</dbReference>
<dbReference type="SUPFAM" id="SSF56553">
    <property type="entry name" value="Insert subdomain of RNA polymerase alpha subunit"/>
    <property type="match status" value="1"/>
</dbReference>
<dbReference type="SUPFAM" id="SSF55257">
    <property type="entry name" value="RBP11-like subunits of RNA polymerase"/>
    <property type="match status" value="1"/>
</dbReference>
<accession>Q8YPK3</accession>
<comment type="function">
    <text evidence="2">DNA-dependent RNA polymerase catalyzes the transcription of DNA into RNA using the four ribonucleoside triphosphates as substrates.</text>
</comment>
<comment type="catalytic activity">
    <reaction evidence="2">
        <text>RNA(n) + a ribonucleoside 5'-triphosphate = RNA(n+1) + diphosphate</text>
        <dbReference type="Rhea" id="RHEA:21248"/>
        <dbReference type="Rhea" id="RHEA-COMP:14527"/>
        <dbReference type="Rhea" id="RHEA-COMP:17342"/>
        <dbReference type="ChEBI" id="CHEBI:33019"/>
        <dbReference type="ChEBI" id="CHEBI:61557"/>
        <dbReference type="ChEBI" id="CHEBI:140395"/>
        <dbReference type="EC" id="2.7.7.6"/>
    </reaction>
</comment>
<comment type="subunit">
    <text evidence="1">Homodimer. In cyanobacteria the RNAP catalytic core is composed of 2 alpha, 1 beta, 1 beta', 1 gamma and 1 omega subunit. When a sigma factor is associated with the core the holoenzyme is formed, which can initiate transcription (By similarity).</text>
</comment>
<comment type="domain">
    <text evidence="2">The N-terminal domain is essential for RNAP assembly and basal transcription, whereas the C-terminal domain is involved in interaction with transcriptional regulators and with upstream promoter elements.</text>
</comment>
<comment type="similarity">
    <text evidence="2">Belongs to the RNA polymerase alpha chain family.</text>
</comment>
<feature type="chain" id="PRO_0000175255" description="DNA-directed RNA polymerase subunit alpha">
    <location>
        <begin position="1"/>
        <end position="315"/>
    </location>
</feature>
<feature type="region of interest" description="Alpha N-terminal domain (alpha-NTD)" evidence="2">
    <location>
        <begin position="1"/>
        <end position="228"/>
    </location>
</feature>
<feature type="region of interest" description="Alpha C-terminal domain (alpha-CTD)" evidence="2">
    <location>
        <begin position="243"/>
        <end position="315"/>
    </location>
</feature>
<organism>
    <name type="scientific">Nostoc sp. (strain PCC 7120 / SAG 25.82 / UTEX 2576)</name>
    <dbReference type="NCBI Taxonomy" id="103690"/>
    <lineage>
        <taxon>Bacteria</taxon>
        <taxon>Bacillati</taxon>
        <taxon>Cyanobacteriota</taxon>
        <taxon>Cyanophyceae</taxon>
        <taxon>Nostocales</taxon>
        <taxon>Nostocaceae</taxon>
        <taxon>Nostoc</taxon>
    </lineage>
</organism>
<keyword id="KW-0002">3D-structure</keyword>
<keyword id="KW-0240">DNA-directed RNA polymerase</keyword>
<keyword id="KW-0548">Nucleotidyltransferase</keyword>
<keyword id="KW-1185">Reference proteome</keyword>
<keyword id="KW-0804">Transcription</keyword>
<keyword id="KW-0808">Transferase</keyword>
<evidence type="ECO:0000250" key="1"/>
<evidence type="ECO:0000255" key="2">
    <source>
        <dbReference type="HAMAP-Rule" id="MF_00059"/>
    </source>
</evidence>
<proteinExistence type="evidence at protein level"/>
<sequence length="315" mass="35073">MAQFQIECVESNTEESRNHYSKFILEPLERGQGTTVGNALRRVLLSNLEGTAVTAVRIAGVSHEFATVPGVREDVLEIIMRMKEVILKSYSSQAQIGRLLVNGPTTITASHFDLPSEVEVIDPTQYVATIAEGGKLEMEFRIERGKGYRTVERGREEATSLDFLQIDSIFMPVRKVNYSVEEVRADGSIPKDRLLLEVWTNGSISPQEALSSAAGILVDLFNPLKDISLEPTDTNSDIPDDPTAQIPIEELQLSVRAYNCLKRAQVNSVADLLDYTQEDLLEIKNFGQKSAEEVVEALQRRLGITLPQERSSKHN</sequence>
<gene>
    <name evidence="2" type="primary">rpoA</name>
    <name type="ordered locus">all4191</name>
</gene>